<sequence>MNTIQVIIFAVVLVLTVTVGQADEDSPEASLLRKLKEAEASLFGQNLEESRNSRQKRCGGVDAPCDKDRPDCCSYAECLRPSGYGWWHGTYYCYRKRER</sequence>
<reference key="1">
    <citation type="submission" date="2007-01" db="EMBL/GenBank/DDBJ databases">
        <title>Screening of a Lasiodora sp. expression library and molecular cloning of Lasiodora sp. toxins in expression vectors.</title>
        <authorList>
            <person name="Castro I.M."/>
            <person name="Moura M.B."/>
            <person name="Kalapothakis E."/>
        </authorList>
    </citation>
    <scope>NUCLEOTIDE SEQUENCE [MRNA]</scope>
    <source>
        <tissue>Venom gland</tissue>
    </source>
</reference>
<evidence type="ECO:0000250" key="1"/>
<evidence type="ECO:0000255" key="2"/>
<evidence type="ECO:0000305" key="3"/>
<evidence type="ECO:0000312" key="4">
    <source>
        <dbReference type="EMBL" id="ABN13623.1"/>
    </source>
</evidence>
<organism>
    <name type="scientific">Lasiodora sp. (strain IBSP 8539)</name>
    <name type="common">Brazilian salmon pink birdeater</name>
    <name type="synonym">Brazilian salmon pink tarantula</name>
    <dbReference type="NCBI Taxonomy" id="300858"/>
    <lineage>
        <taxon>Eukaryota</taxon>
        <taxon>Metazoa</taxon>
        <taxon>Ecdysozoa</taxon>
        <taxon>Arthropoda</taxon>
        <taxon>Chelicerata</taxon>
        <taxon>Arachnida</taxon>
        <taxon>Araneae</taxon>
        <taxon>Mygalomorphae</taxon>
        <taxon>Theraphosidae</taxon>
        <taxon>Lasiodora</taxon>
    </lineage>
</organism>
<accession>A3F7X1</accession>
<proteinExistence type="inferred from homology"/>
<protein>
    <recommendedName>
        <fullName>U2-theraphotoxin-Lsp1a</fullName>
        <shortName>U2-TRTX-Lsp1a</shortName>
    </recommendedName>
    <alternativeName>
        <fullName evidence="4">LTx4</fullName>
    </alternativeName>
</protein>
<comment type="function">
    <text evidence="1">Insecticidal neurotoxin.</text>
</comment>
<comment type="subcellular location">
    <subcellularLocation>
        <location evidence="1">Secreted</location>
    </subcellularLocation>
</comment>
<comment type="tissue specificity">
    <text evidence="3">Expressed by the venom gland.</text>
</comment>
<comment type="domain">
    <text evidence="1">The presence of a 'disulfide through disulfide knot' structurally defines this protein as a knottin.</text>
</comment>
<comment type="similarity">
    <text evidence="3">Belongs to the neurotoxin 14 (magi-1) family. 08 (Ltx-4) subfamily.</text>
</comment>
<feature type="signal peptide" evidence="2">
    <location>
        <begin position="1"/>
        <end position="22"/>
    </location>
</feature>
<feature type="propeptide" id="PRO_0000290256" evidence="1">
    <location>
        <begin position="23"/>
        <end position="57"/>
    </location>
</feature>
<feature type="chain" id="PRO_0000290257" description="U2-theraphotoxin-Lsp1a">
    <location>
        <begin position="58"/>
        <end position="99"/>
    </location>
</feature>
<feature type="disulfide bond" evidence="1">
    <location>
        <begin position="58"/>
        <end position="73"/>
    </location>
</feature>
<feature type="disulfide bond" evidence="1">
    <location>
        <begin position="65"/>
        <end position="78"/>
    </location>
</feature>
<feature type="disulfide bond" evidence="1">
    <location>
        <begin position="72"/>
        <end position="93"/>
    </location>
</feature>
<dbReference type="EMBL" id="EF219061">
    <property type="protein sequence ID" value="ABN13623.1"/>
    <property type="molecule type" value="mRNA"/>
</dbReference>
<dbReference type="SMR" id="A3F7X1"/>
<dbReference type="ArachnoServer" id="AS000509">
    <property type="toxin name" value="U2-theraphotoxin-Lsp1a"/>
</dbReference>
<dbReference type="GO" id="GO:0005576">
    <property type="term" value="C:extracellular region"/>
    <property type="evidence" value="ECO:0007669"/>
    <property type="project" value="UniProtKB-SubCell"/>
</dbReference>
<dbReference type="GO" id="GO:0019871">
    <property type="term" value="F:sodium channel inhibitor activity"/>
    <property type="evidence" value="ECO:0007669"/>
    <property type="project" value="InterPro"/>
</dbReference>
<dbReference type="GO" id="GO:0090729">
    <property type="term" value="F:toxin activity"/>
    <property type="evidence" value="ECO:0007669"/>
    <property type="project" value="UniProtKB-KW"/>
</dbReference>
<dbReference type="InterPro" id="IPR012627">
    <property type="entry name" value="Toxin_22"/>
</dbReference>
<dbReference type="Pfam" id="PF08092">
    <property type="entry name" value="Toxin_22"/>
    <property type="match status" value="1"/>
</dbReference>
<keyword id="KW-0165">Cleavage on pair of basic residues</keyword>
<keyword id="KW-1015">Disulfide bond</keyword>
<keyword id="KW-0960">Knottin</keyword>
<keyword id="KW-0964">Secreted</keyword>
<keyword id="KW-0732">Signal</keyword>
<keyword id="KW-0800">Toxin</keyword>
<name>TXLT4_LASSB</name>